<protein>
    <recommendedName>
        <fullName evidence="1">Large ribosomal subunit protein uL11</fullName>
    </recommendedName>
    <alternativeName>
        <fullName evidence="2">50S ribosomal protein L11</fullName>
    </alternativeName>
</protein>
<name>RL11_CARHZ</name>
<proteinExistence type="inferred from homology"/>
<feature type="chain" id="PRO_0000258134" description="Large ribosomal subunit protein uL11">
    <location>
        <begin position="1"/>
        <end position="141"/>
    </location>
</feature>
<comment type="function">
    <text evidence="1">Forms part of the ribosomal stalk which helps the ribosome interact with GTP-bound translation factors.</text>
</comment>
<comment type="subunit">
    <text evidence="1">Part of the ribosomal stalk of the 50S ribosomal subunit. Interacts with L10 and the large rRNA to form the base of the stalk. L10 forms an elongated spine to which L12 dimers bind in a sequential fashion forming a multimeric L10(L12)X complex.</text>
</comment>
<comment type="PTM">
    <text evidence="1">One or more lysine residues are methylated.</text>
</comment>
<comment type="similarity">
    <text evidence="1">Belongs to the universal ribosomal protein uL11 family.</text>
</comment>
<sequence>MAKKVVAVVKLQIPAGKATPAPPVGPALGQHGVNIMAFVKEYNERTAQQAGMIIPVEITVYEDRSFTFVTKTPPASDLLKKAAGIESGSGQPNKKKVGKVTRAKIREIAELKLKDLNANDVEAAMRMIEGTARSMGIEVVD</sequence>
<gene>
    <name evidence="1" type="primary">rplK</name>
    <name type="ordered locus">CHY_2323</name>
</gene>
<evidence type="ECO:0000255" key="1">
    <source>
        <dbReference type="HAMAP-Rule" id="MF_00736"/>
    </source>
</evidence>
<evidence type="ECO:0000305" key="2"/>
<dbReference type="EMBL" id="CP000141">
    <property type="protein sequence ID" value="ABB14988.1"/>
    <property type="molecule type" value="Genomic_DNA"/>
</dbReference>
<dbReference type="RefSeq" id="WP_011345205.1">
    <property type="nucleotide sequence ID" value="NC_007503.1"/>
</dbReference>
<dbReference type="SMR" id="Q3A9Q2"/>
<dbReference type="FunCoup" id="Q3A9Q2">
    <property type="interactions" value="471"/>
</dbReference>
<dbReference type="STRING" id="246194.CHY_2323"/>
<dbReference type="KEGG" id="chy:CHY_2323"/>
<dbReference type="eggNOG" id="COG0080">
    <property type="taxonomic scope" value="Bacteria"/>
</dbReference>
<dbReference type="HOGENOM" id="CLU_074237_2_1_9"/>
<dbReference type="InParanoid" id="Q3A9Q2"/>
<dbReference type="OrthoDB" id="9802408at2"/>
<dbReference type="Proteomes" id="UP000002706">
    <property type="component" value="Chromosome"/>
</dbReference>
<dbReference type="GO" id="GO:0022625">
    <property type="term" value="C:cytosolic large ribosomal subunit"/>
    <property type="evidence" value="ECO:0007669"/>
    <property type="project" value="TreeGrafter"/>
</dbReference>
<dbReference type="GO" id="GO:0070180">
    <property type="term" value="F:large ribosomal subunit rRNA binding"/>
    <property type="evidence" value="ECO:0007669"/>
    <property type="project" value="UniProtKB-UniRule"/>
</dbReference>
<dbReference type="GO" id="GO:0003735">
    <property type="term" value="F:structural constituent of ribosome"/>
    <property type="evidence" value="ECO:0007669"/>
    <property type="project" value="InterPro"/>
</dbReference>
<dbReference type="GO" id="GO:0006412">
    <property type="term" value="P:translation"/>
    <property type="evidence" value="ECO:0007669"/>
    <property type="project" value="UniProtKB-UniRule"/>
</dbReference>
<dbReference type="CDD" id="cd00349">
    <property type="entry name" value="Ribosomal_L11"/>
    <property type="match status" value="1"/>
</dbReference>
<dbReference type="FunFam" id="1.10.10.250:FF:000001">
    <property type="entry name" value="50S ribosomal protein L11"/>
    <property type="match status" value="1"/>
</dbReference>
<dbReference type="FunFam" id="3.30.1550.10:FF:000001">
    <property type="entry name" value="50S ribosomal protein L11"/>
    <property type="match status" value="1"/>
</dbReference>
<dbReference type="Gene3D" id="1.10.10.250">
    <property type="entry name" value="Ribosomal protein L11, C-terminal domain"/>
    <property type="match status" value="1"/>
</dbReference>
<dbReference type="Gene3D" id="3.30.1550.10">
    <property type="entry name" value="Ribosomal protein L11/L12, N-terminal domain"/>
    <property type="match status" value="1"/>
</dbReference>
<dbReference type="HAMAP" id="MF_00736">
    <property type="entry name" value="Ribosomal_uL11"/>
    <property type="match status" value="1"/>
</dbReference>
<dbReference type="InterPro" id="IPR000911">
    <property type="entry name" value="Ribosomal_uL11"/>
</dbReference>
<dbReference type="InterPro" id="IPR006519">
    <property type="entry name" value="Ribosomal_uL11_bac-typ"/>
</dbReference>
<dbReference type="InterPro" id="IPR020783">
    <property type="entry name" value="Ribosomal_uL11_C"/>
</dbReference>
<dbReference type="InterPro" id="IPR036769">
    <property type="entry name" value="Ribosomal_uL11_C_sf"/>
</dbReference>
<dbReference type="InterPro" id="IPR020785">
    <property type="entry name" value="Ribosomal_uL11_CS"/>
</dbReference>
<dbReference type="InterPro" id="IPR020784">
    <property type="entry name" value="Ribosomal_uL11_N"/>
</dbReference>
<dbReference type="InterPro" id="IPR036796">
    <property type="entry name" value="Ribosomal_uL11_N_sf"/>
</dbReference>
<dbReference type="NCBIfam" id="TIGR01632">
    <property type="entry name" value="L11_bact"/>
    <property type="match status" value="1"/>
</dbReference>
<dbReference type="PANTHER" id="PTHR11661">
    <property type="entry name" value="60S RIBOSOMAL PROTEIN L12"/>
    <property type="match status" value="1"/>
</dbReference>
<dbReference type="PANTHER" id="PTHR11661:SF1">
    <property type="entry name" value="LARGE RIBOSOMAL SUBUNIT PROTEIN UL11M"/>
    <property type="match status" value="1"/>
</dbReference>
<dbReference type="Pfam" id="PF00298">
    <property type="entry name" value="Ribosomal_L11"/>
    <property type="match status" value="1"/>
</dbReference>
<dbReference type="Pfam" id="PF03946">
    <property type="entry name" value="Ribosomal_L11_N"/>
    <property type="match status" value="1"/>
</dbReference>
<dbReference type="SMART" id="SM00649">
    <property type="entry name" value="RL11"/>
    <property type="match status" value="1"/>
</dbReference>
<dbReference type="SUPFAM" id="SSF54747">
    <property type="entry name" value="Ribosomal L11/L12e N-terminal domain"/>
    <property type="match status" value="1"/>
</dbReference>
<dbReference type="SUPFAM" id="SSF46906">
    <property type="entry name" value="Ribosomal protein L11, C-terminal domain"/>
    <property type="match status" value="1"/>
</dbReference>
<dbReference type="PROSITE" id="PS00359">
    <property type="entry name" value="RIBOSOMAL_L11"/>
    <property type="match status" value="1"/>
</dbReference>
<reference key="1">
    <citation type="journal article" date="2005" name="PLoS Genet.">
        <title>Life in hot carbon monoxide: the complete genome sequence of Carboxydothermus hydrogenoformans Z-2901.</title>
        <authorList>
            <person name="Wu M."/>
            <person name="Ren Q."/>
            <person name="Durkin A.S."/>
            <person name="Daugherty S.C."/>
            <person name="Brinkac L.M."/>
            <person name="Dodson R.J."/>
            <person name="Madupu R."/>
            <person name="Sullivan S.A."/>
            <person name="Kolonay J.F."/>
            <person name="Nelson W.C."/>
            <person name="Tallon L.J."/>
            <person name="Jones K.M."/>
            <person name="Ulrich L.E."/>
            <person name="Gonzalez J.M."/>
            <person name="Zhulin I.B."/>
            <person name="Robb F.T."/>
            <person name="Eisen J.A."/>
        </authorList>
    </citation>
    <scope>NUCLEOTIDE SEQUENCE [LARGE SCALE GENOMIC DNA]</scope>
    <source>
        <strain>ATCC BAA-161 / DSM 6008 / Z-2901</strain>
    </source>
</reference>
<keyword id="KW-0488">Methylation</keyword>
<keyword id="KW-1185">Reference proteome</keyword>
<keyword id="KW-0687">Ribonucleoprotein</keyword>
<keyword id="KW-0689">Ribosomal protein</keyword>
<keyword id="KW-0694">RNA-binding</keyword>
<keyword id="KW-0699">rRNA-binding</keyword>
<accession>Q3A9Q2</accession>
<organism>
    <name type="scientific">Carboxydothermus hydrogenoformans (strain ATCC BAA-161 / DSM 6008 / Z-2901)</name>
    <dbReference type="NCBI Taxonomy" id="246194"/>
    <lineage>
        <taxon>Bacteria</taxon>
        <taxon>Bacillati</taxon>
        <taxon>Bacillota</taxon>
        <taxon>Clostridia</taxon>
        <taxon>Thermoanaerobacterales</taxon>
        <taxon>Thermoanaerobacteraceae</taxon>
        <taxon>Carboxydothermus</taxon>
    </lineage>
</organism>